<feature type="chain" id="PRO_0000070159" description="Trace amine-associated receptor 6">
    <location>
        <begin position="1"/>
        <end position="345"/>
    </location>
</feature>
<feature type="topological domain" description="Extracellular" evidence="3">
    <location>
        <begin position="1"/>
        <end position="32"/>
    </location>
</feature>
<feature type="transmembrane region" description="Helical; Name=1" evidence="3">
    <location>
        <begin position="33"/>
        <end position="53"/>
    </location>
</feature>
<feature type="topological domain" description="Cytoplasmic" evidence="3">
    <location>
        <begin position="54"/>
        <end position="68"/>
    </location>
</feature>
<feature type="transmembrane region" description="Helical; Name=2" evidence="3">
    <location>
        <begin position="69"/>
        <end position="89"/>
    </location>
</feature>
<feature type="topological domain" description="Extracellular" evidence="3">
    <location>
        <begin position="90"/>
        <end position="107"/>
    </location>
</feature>
<feature type="transmembrane region" description="Helical; Name=3" evidence="3">
    <location>
        <begin position="108"/>
        <end position="128"/>
    </location>
</feature>
<feature type="topological domain" description="Cytoplasmic" evidence="3">
    <location>
        <begin position="129"/>
        <end position="147"/>
    </location>
</feature>
<feature type="transmembrane region" description="Helical; Name=4" evidence="3">
    <location>
        <begin position="148"/>
        <end position="168"/>
    </location>
</feature>
<feature type="topological domain" description="Extracellular" evidence="3">
    <location>
        <begin position="169"/>
        <end position="202"/>
    </location>
</feature>
<feature type="transmembrane region" description="Helical; Name=5" evidence="3">
    <location>
        <begin position="203"/>
        <end position="223"/>
    </location>
</feature>
<feature type="topological domain" description="Cytoplasmic" evidence="3">
    <location>
        <begin position="224"/>
        <end position="259"/>
    </location>
</feature>
<feature type="transmembrane region" description="Helical; Name=6" evidence="3">
    <location>
        <begin position="260"/>
        <end position="276"/>
    </location>
</feature>
<feature type="topological domain" description="Extracellular" evidence="3">
    <location>
        <begin position="277"/>
        <end position="282"/>
    </location>
</feature>
<feature type="transmembrane region" description="Helical; Name=7" evidence="3">
    <location>
        <begin position="283"/>
        <end position="302"/>
    </location>
</feature>
<feature type="topological domain" description="Cytoplasmic" evidence="3">
    <location>
        <begin position="303"/>
        <end position="345"/>
    </location>
</feature>
<feature type="region of interest" description="Extracellular Loop 2 (ECL2)" evidence="1">
    <location>
        <begin position="174"/>
        <end position="187"/>
    </location>
</feature>
<feature type="glycosylation site" description="N-linked (GlcNAc...) asparagine" evidence="3">
    <location>
        <position position="17"/>
    </location>
</feature>
<feature type="disulfide bond" evidence="1">
    <location>
        <begin position="22"/>
        <end position="186"/>
    </location>
</feature>
<feature type="disulfide bond" evidence="4">
    <location>
        <begin position="105"/>
        <end position="190"/>
    </location>
</feature>
<feature type="mutagenesis site" description="Promotes trace-amine receptor activity toward spermidine." evidence="8">
    <original>V</original>
    <variation>T</variation>
    <location>
        <position position="113"/>
    </location>
</feature>
<reference key="1">
    <citation type="journal article" date="2005" name="Genomics">
        <title>Trace amine-associated receptors form structurally and functionally distinct subfamilies of novel G protein-coupled receptors.</title>
        <authorList>
            <person name="Lindemann L."/>
            <person name="Ebeling M."/>
            <person name="Kratochwil N.A."/>
            <person name="Bunzow J.R."/>
            <person name="Grandy D.K."/>
            <person name="Hoener M.C."/>
        </authorList>
    </citation>
    <scope>NUCLEOTIDE SEQUENCE [GENOMIC DNA]</scope>
    <source>
        <strain>C57BL/6J</strain>
    </source>
</reference>
<reference key="2">
    <citation type="journal article" date="2006" name="Nature">
        <title>A second class of chemosensory receptors in the olfactory epithelium.</title>
        <authorList>
            <person name="Liberles S.D."/>
            <person name="Buck L.B."/>
        </authorList>
    </citation>
    <scope>TISSUE SPECIFICITY</scope>
</reference>
<reference key="3">
    <citation type="journal article" date="2012" name="Proc. Natl. Acad. Sci. U.S.A.">
        <title>Neurons expressing trace amine-associated receptors project to discrete glomeruli and constitute an olfactory subsystem.</title>
        <authorList>
            <person name="Johnson M.A."/>
            <person name="Tsai L."/>
            <person name="Roy D.S."/>
            <person name="Valenzuela D.H."/>
            <person name="Mosley C."/>
            <person name="Magklara A."/>
            <person name="Lomvardas S."/>
            <person name="Liberles S.D."/>
            <person name="Barnea G."/>
        </authorList>
    </citation>
    <scope>TISSUE SPECIFICITY</scope>
</reference>
<reference key="4">
    <citation type="journal article" date="2013" name="Nature">
        <title>Non-redundant coding of aversive odours in the main olfactory pathway.</title>
        <authorList>
            <person name="Dewan A."/>
            <person name="Pacifico R."/>
            <person name="Zhan R."/>
            <person name="Rinberg D."/>
            <person name="Bozza T."/>
        </authorList>
    </citation>
    <scope>DISRUPTION PHENOTYPE</scope>
</reference>
<reference key="5">
    <citation type="journal article" date="2023" name="Nature">
        <title>Structural basis of amine odorant perception by a mammal olfactory receptor.</title>
        <authorList>
            <person name="Guo L."/>
            <person name="Cheng J."/>
            <person name="Lian S."/>
            <person name="Liu Q."/>
            <person name="Lu Y."/>
            <person name="Zheng Y."/>
            <person name="Zhu K."/>
            <person name="Zhang M."/>
            <person name="Kong Y."/>
            <person name="Zhang C."/>
            <person name="Rong N."/>
            <person name="Zhuang Y."/>
            <person name="Fang G."/>
            <person name="Jiang J."/>
            <person name="Zhang T."/>
            <person name="Han X."/>
            <person name="Liu Z."/>
            <person name="Xia M."/>
            <person name="Liu S."/>
            <person name="Zhang L."/>
            <person name="Liberles S.D."/>
            <person name="Yu X."/>
            <person name="Xu Y."/>
            <person name="Yang F."/>
            <person name="Li Q."/>
            <person name="Sun J.P."/>
        </authorList>
    </citation>
    <scope>FUNCTION</scope>
    <scope>MUTAGENESIS OF VAL-113</scope>
</reference>
<dbReference type="EMBL" id="AY702330">
    <property type="protein sequence ID" value="AAV70140.1"/>
    <property type="molecule type" value="Genomic_DNA"/>
</dbReference>
<dbReference type="CCDS" id="CCDS23739.1"/>
<dbReference type="RefSeq" id="NP_001010828.1">
    <property type="nucleotide sequence ID" value="NM_001010828.1"/>
</dbReference>
<dbReference type="SMR" id="Q5QD13"/>
<dbReference type="FunCoup" id="Q5QD13">
    <property type="interactions" value="801"/>
</dbReference>
<dbReference type="STRING" id="10090.ENSMUSP00000097603"/>
<dbReference type="GlyCosmos" id="Q5QD13">
    <property type="glycosylation" value="1 site, No reported glycans"/>
</dbReference>
<dbReference type="GlyGen" id="Q5QD13">
    <property type="glycosylation" value="1 site"/>
</dbReference>
<dbReference type="PhosphoSitePlus" id="Q5QD13"/>
<dbReference type="PaxDb" id="10090-ENSMUSP00000097603"/>
<dbReference type="DNASU" id="215855"/>
<dbReference type="Ensembl" id="ENSMUST00000057080.4">
    <property type="protein sequence ID" value="ENSMUSP00000097603.2"/>
    <property type="gene ID" value="ENSMUSG00000045111.6"/>
</dbReference>
<dbReference type="GeneID" id="215855"/>
<dbReference type="KEGG" id="mmu:215855"/>
<dbReference type="UCSC" id="uc007eqi.1">
    <property type="organism name" value="mouse"/>
</dbReference>
<dbReference type="AGR" id="MGI:2685074"/>
<dbReference type="CTD" id="319100"/>
<dbReference type="MGI" id="MGI:2685074">
    <property type="gene designation" value="Taar6"/>
</dbReference>
<dbReference type="VEuPathDB" id="HostDB:ENSMUSG00000045111"/>
<dbReference type="eggNOG" id="KOG3656">
    <property type="taxonomic scope" value="Eukaryota"/>
</dbReference>
<dbReference type="GeneTree" id="ENSGT00940000161306"/>
<dbReference type="HOGENOM" id="CLU_009579_11_0_1"/>
<dbReference type="InParanoid" id="Q5QD13"/>
<dbReference type="OMA" id="MIILYGN"/>
<dbReference type="OrthoDB" id="5959645at2759"/>
<dbReference type="PhylomeDB" id="Q5QD13"/>
<dbReference type="TreeFam" id="TF343107"/>
<dbReference type="Reactome" id="R-MMU-375280">
    <property type="pathway name" value="Amine ligand-binding receptors"/>
</dbReference>
<dbReference type="Reactome" id="R-MMU-418555">
    <property type="pathway name" value="G alpha (s) signalling events"/>
</dbReference>
<dbReference type="BioGRID-ORCS" id="215855">
    <property type="hits" value="1 hit in 76 CRISPR screens"/>
</dbReference>
<dbReference type="PRO" id="PR:Q5QD13"/>
<dbReference type="Proteomes" id="UP000000589">
    <property type="component" value="Chromosome 10"/>
</dbReference>
<dbReference type="RNAct" id="Q5QD13">
    <property type="molecule type" value="protein"/>
</dbReference>
<dbReference type="Bgee" id="ENSMUSG00000045111">
    <property type="expression patterns" value="Expressed in septal olfactory organ and 2 other cell types or tissues"/>
</dbReference>
<dbReference type="GO" id="GO:0005886">
    <property type="term" value="C:plasma membrane"/>
    <property type="evidence" value="ECO:0000250"/>
    <property type="project" value="UniProtKB"/>
</dbReference>
<dbReference type="GO" id="GO:0001594">
    <property type="term" value="F:trace-amine receptor activity"/>
    <property type="evidence" value="ECO:0000314"/>
    <property type="project" value="UniProtKB"/>
</dbReference>
<dbReference type="GO" id="GO:0007189">
    <property type="term" value="P:adenylate cyclase-activating G protein-coupled receptor signaling pathway"/>
    <property type="evidence" value="ECO:0000314"/>
    <property type="project" value="UniProtKB"/>
</dbReference>
<dbReference type="CDD" id="cd15316">
    <property type="entry name" value="7tmA_TAAR6_8_9"/>
    <property type="match status" value="1"/>
</dbReference>
<dbReference type="FunFam" id="1.20.1070.10:FF:000030">
    <property type="entry name" value="trace amine-associated receptor 1"/>
    <property type="match status" value="1"/>
</dbReference>
<dbReference type="Gene3D" id="1.20.1070.10">
    <property type="entry name" value="Rhodopsin 7-helix transmembrane proteins"/>
    <property type="match status" value="1"/>
</dbReference>
<dbReference type="InterPro" id="IPR000276">
    <property type="entry name" value="GPCR_Rhodpsn"/>
</dbReference>
<dbReference type="InterPro" id="IPR017452">
    <property type="entry name" value="GPCR_Rhodpsn_7TM"/>
</dbReference>
<dbReference type="InterPro" id="IPR050569">
    <property type="entry name" value="TAAR"/>
</dbReference>
<dbReference type="InterPro" id="IPR009132">
    <property type="entry name" value="TAAR_fam"/>
</dbReference>
<dbReference type="PANTHER" id="PTHR24249">
    <property type="entry name" value="HISTAMINE RECEPTOR-RELATED G-PROTEIN COUPLED RECEPTOR"/>
    <property type="match status" value="1"/>
</dbReference>
<dbReference type="PANTHER" id="PTHR24249:SF271">
    <property type="entry name" value="TRACE AMINE-ASSOCIATED RECEPTOR 6"/>
    <property type="match status" value="1"/>
</dbReference>
<dbReference type="Pfam" id="PF00001">
    <property type="entry name" value="7tm_1"/>
    <property type="match status" value="1"/>
</dbReference>
<dbReference type="PRINTS" id="PR00237">
    <property type="entry name" value="GPCRRHODOPSN"/>
</dbReference>
<dbReference type="PRINTS" id="PR01830">
    <property type="entry name" value="TRACEAMINER"/>
</dbReference>
<dbReference type="SMART" id="SM01381">
    <property type="entry name" value="7TM_GPCR_Srsx"/>
    <property type="match status" value="1"/>
</dbReference>
<dbReference type="SUPFAM" id="SSF81321">
    <property type="entry name" value="Family A G protein-coupled receptor-like"/>
    <property type="match status" value="1"/>
</dbReference>
<dbReference type="PROSITE" id="PS00237">
    <property type="entry name" value="G_PROTEIN_RECEP_F1_1"/>
    <property type="match status" value="1"/>
</dbReference>
<dbReference type="PROSITE" id="PS50262">
    <property type="entry name" value="G_PROTEIN_RECEP_F1_2"/>
    <property type="match status" value="1"/>
</dbReference>
<proteinExistence type="evidence at protein level"/>
<gene>
    <name evidence="9 10" type="primary">Taar6</name>
    <name evidence="10" type="synonym">Gm228</name>
</gene>
<keyword id="KW-1003">Cell membrane</keyword>
<keyword id="KW-1015">Disulfide bond</keyword>
<keyword id="KW-0297">G-protein coupled receptor</keyword>
<keyword id="KW-0325">Glycoprotein</keyword>
<keyword id="KW-0472">Membrane</keyword>
<keyword id="KW-0675">Receptor</keyword>
<keyword id="KW-1185">Reference proteome</keyword>
<keyword id="KW-0807">Transducer</keyword>
<keyword id="KW-0812">Transmembrane</keyword>
<keyword id="KW-1133">Transmembrane helix</keyword>
<sequence length="345" mass="38279">MGSNSSPPTVLQLCYENVTGSCVKTPYSPGSRVILYAVFGFGAVLAVFGNLMVMISILHFKQLHSPTNFLIASLACADFGVGISVMPFSMVRSIESCWYFGRSFCTFHTCCDVAFCYSSLFHLSFISIDRYIAVTDPLVYPTKFTVSVSGICIGVSWILPLVYSGAVFYTGVYDDGLEELSSALNCVGGCQVVVNQNWVLIDFLSFLIPTLVMIILYGNIFLVARQQAKKIENIGSKTESSSESYKARVARRERKAAKTLGITVVAFMISWLPYSIDSLVDAFMGFITPAYIYEICVWCAYYNSAMNPLIYALFYPWFKKAIKVIMSGQVFKNSSATMNLFSEQI</sequence>
<protein>
    <recommendedName>
        <fullName evidence="9">Trace amine-associated receptor 6</fullName>
        <shortName>TaR-6</shortName>
        <shortName evidence="9">Trace amine receptor 6</shortName>
        <shortName>mTaar6</shortName>
    </recommendedName>
</protein>
<accession>Q5QD13</accession>
<organism>
    <name type="scientific">Mus musculus</name>
    <name type="common">Mouse</name>
    <dbReference type="NCBI Taxonomy" id="10090"/>
    <lineage>
        <taxon>Eukaryota</taxon>
        <taxon>Metazoa</taxon>
        <taxon>Chordata</taxon>
        <taxon>Craniata</taxon>
        <taxon>Vertebrata</taxon>
        <taxon>Euteleostomi</taxon>
        <taxon>Mammalia</taxon>
        <taxon>Eutheria</taxon>
        <taxon>Euarchontoglires</taxon>
        <taxon>Glires</taxon>
        <taxon>Rodentia</taxon>
        <taxon>Myomorpha</taxon>
        <taxon>Muroidea</taxon>
        <taxon>Muridae</taxon>
        <taxon>Murinae</taxon>
        <taxon>Mus</taxon>
        <taxon>Mus</taxon>
    </lineage>
</organism>
<comment type="function">
    <text evidence="8">Olfactory receptor specific for trace amines, such as beta-phenylethylamine (beta-PEA) (PubMed:37225986). Trace amine compounds are enriched in animal body fluids and act on trace amine-associated receptors (TAARs) to elicit both intraspecific and interspecific innate behaviors (PubMed:37225986). Beta-PEA-binding causes a conformation change that triggers signaling via G(s)-class of G alpha proteins (GNAL or GNAS) (PubMed:37225986).</text>
</comment>
<comment type="subcellular location">
    <subcellularLocation>
        <location evidence="2">Cell membrane</location>
        <topology evidence="3">Multi-pass membrane protein</topology>
    </subcellularLocation>
</comment>
<comment type="tissue specificity">
    <text evidence="5 6">Specifically expressed in neurons of the olfactory epithelium, to discrete glomeruli predominantly localized to a confined bulb region (PubMed:16878137, PubMed:22837392). Present in a ventral area of the main olfactory epithelium (PubMed:16878137, PubMed:22837392).</text>
</comment>
<comment type="domain">
    <text evidence="1">In addition to the well known disulfide bond common to G-protein coupled receptor 1 family, trace amine-associated receptors (TAARs) contain an unique disulfide bond (Cys-22-Cys-186) connecting the N-terminus to the extracellular Loop 2 (ECL2), which is required for agonist-induced receptor activation.</text>
</comment>
<comment type="disruption phenotype">
    <text evidence="7">Mice lacking Taar2, Taar3, Taar4, Taar5, Taar6, Taar7a, Taar7b, Taar7d, Taar7e, Taar7f, Taar8a, Taar8b, Taar8c and Taar9 show no visible phenotype or behavioral deficits (PubMed:23624375). They however show an absence of aversion to low concentrations of amines such as 2-phenylethylamine, isopentylamine, N-methylpiperidine and cadaverine (PubMed:23624375).</text>
</comment>
<comment type="similarity">
    <text evidence="4">Belongs to the G-protein coupled receptor 1 family.</text>
</comment>
<name>TAAR6_MOUSE</name>
<evidence type="ECO:0000250" key="1">
    <source>
        <dbReference type="UniProtKB" id="Q5QD04"/>
    </source>
</evidence>
<evidence type="ECO:0000250" key="2">
    <source>
        <dbReference type="UniProtKB" id="Q96RI8"/>
    </source>
</evidence>
<evidence type="ECO:0000255" key="3"/>
<evidence type="ECO:0000255" key="4">
    <source>
        <dbReference type="PROSITE-ProRule" id="PRU00521"/>
    </source>
</evidence>
<evidence type="ECO:0000269" key="5">
    <source>
    </source>
</evidence>
<evidence type="ECO:0000269" key="6">
    <source>
    </source>
</evidence>
<evidence type="ECO:0000269" key="7">
    <source>
    </source>
</evidence>
<evidence type="ECO:0000269" key="8">
    <source>
    </source>
</evidence>
<evidence type="ECO:0000303" key="9">
    <source>
    </source>
</evidence>
<evidence type="ECO:0000312" key="10">
    <source>
        <dbReference type="MGI" id="MGI:2685074"/>
    </source>
</evidence>